<feature type="signal peptide" evidence="2">
    <location>
        <begin position="1"/>
        <end position="21"/>
    </location>
</feature>
<feature type="propeptide" id="PRO_0000409975" evidence="1">
    <location>
        <begin position="22"/>
        <end position="44"/>
    </location>
</feature>
<feature type="peptide" id="PRO_0000409976" description="Conotoxin Bu25">
    <location>
        <begin position="45"/>
        <end position="70"/>
    </location>
</feature>
<feature type="modified residue" description="Arginine amide" evidence="1">
    <location>
        <position position="70"/>
    </location>
</feature>
<evidence type="ECO:0000250" key="1"/>
<evidence type="ECO:0000255" key="2"/>
<evidence type="ECO:0000305" key="3"/>
<sequence>MGMRMMVTVFPLVVLATTVVSLRSNRASDGRRGIVNKLNDLVPKYWTECCGRIGPHCSRCICPGVVCPKRG</sequence>
<keyword id="KW-0027">Amidation</keyword>
<keyword id="KW-1015">Disulfide bond</keyword>
<keyword id="KW-0872">Ion channel impairing toxin</keyword>
<keyword id="KW-0528">Neurotoxin</keyword>
<keyword id="KW-0964">Secreted</keyword>
<keyword id="KW-0732">Signal</keyword>
<keyword id="KW-0800">Toxin</keyword>
<protein>
    <recommendedName>
        <fullName>Conotoxin Bu25</fullName>
    </recommendedName>
</protein>
<comment type="subcellular location">
    <subcellularLocation>
        <location evidence="1">Secreted</location>
    </subcellularLocation>
</comment>
<comment type="tissue specificity">
    <text>Expressed by the venom duct.</text>
</comment>
<comment type="domain">
    <text>The cysteine framework is IV (CC-C-C-C-C).</text>
</comment>
<comment type="PTM">
    <text evidence="1">Contains 3 disulfide bonds (By similarity). They are not indicated here, since framework IV presents two different connectivities (I-V, II-III, IV-VI and I-III, II-V, IV-VI).</text>
</comment>
<comment type="similarity">
    <text evidence="3">Belongs to the conotoxin A superfamily.</text>
</comment>
<organism>
    <name type="scientific">Conus bullatus</name>
    <name type="common">Bubble cone</name>
    <dbReference type="NCBI Taxonomy" id="89438"/>
    <lineage>
        <taxon>Eukaryota</taxon>
        <taxon>Metazoa</taxon>
        <taxon>Spiralia</taxon>
        <taxon>Lophotrochozoa</taxon>
        <taxon>Mollusca</taxon>
        <taxon>Gastropoda</taxon>
        <taxon>Caenogastropoda</taxon>
        <taxon>Neogastropoda</taxon>
        <taxon>Conoidea</taxon>
        <taxon>Conidae</taxon>
        <taxon>Conus</taxon>
        <taxon>Textilia</taxon>
    </lineage>
</organism>
<proteinExistence type="evidence at transcript level"/>
<name>CA425_CONBU</name>
<accession>P0CY80</accession>
<reference key="1">
    <citation type="journal article" date="2011" name="BMC Genomics">
        <title>Characterization of the Conus bullatus genome and its venom-duct transcriptome.</title>
        <authorList>
            <person name="Hu H."/>
            <person name="Bandyopadhyay P.K."/>
            <person name="Olivera B.M."/>
            <person name="Yandell M."/>
        </authorList>
    </citation>
    <scope>NUCLEOTIDE SEQUENCE [MRNA]</scope>
    <source>
        <tissue>Venom duct</tissue>
    </source>
</reference>
<dbReference type="GO" id="GO:0005576">
    <property type="term" value="C:extracellular region"/>
    <property type="evidence" value="ECO:0007669"/>
    <property type="project" value="UniProtKB-SubCell"/>
</dbReference>
<dbReference type="GO" id="GO:0030550">
    <property type="term" value="F:acetylcholine receptor inhibitor activity"/>
    <property type="evidence" value="ECO:0007669"/>
    <property type="project" value="InterPro"/>
</dbReference>
<dbReference type="GO" id="GO:0099106">
    <property type="term" value="F:ion channel regulator activity"/>
    <property type="evidence" value="ECO:0007669"/>
    <property type="project" value="UniProtKB-KW"/>
</dbReference>
<dbReference type="GO" id="GO:0090729">
    <property type="term" value="F:toxin activity"/>
    <property type="evidence" value="ECO:0007669"/>
    <property type="project" value="UniProtKB-KW"/>
</dbReference>
<dbReference type="InterPro" id="IPR009958">
    <property type="entry name" value="Conotoxin_a-typ"/>
</dbReference>
<dbReference type="Pfam" id="PF07365">
    <property type="entry name" value="Toxin_8"/>
    <property type="match status" value="1"/>
</dbReference>